<comment type="function">
    <text evidence="1">Catalyzes the desulfonation of aliphatic sulfonates.</text>
</comment>
<comment type="catalytic activity">
    <reaction evidence="1">
        <text>an alkanesulfonate + FMNH2 + O2 = an aldehyde + FMN + sulfite + H2O + 2 H(+)</text>
        <dbReference type="Rhea" id="RHEA:23064"/>
        <dbReference type="ChEBI" id="CHEBI:15377"/>
        <dbReference type="ChEBI" id="CHEBI:15378"/>
        <dbReference type="ChEBI" id="CHEBI:15379"/>
        <dbReference type="ChEBI" id="CHEBI:17359"/>
        <dbReference type="ChEBI" id="CHEBI:17478"/>
        <dbReference type="ChEBI" id="CHEBI:57618"/>
        <dbReference type="ChEBI" id="CHEBI:58210"/>
        <dbReference type="ChEBI" id="CHEBI:134249"/>
        <dbReference type="EC" id="1.14.14.5"/>
    </reaction>
</comment>
<comment type="subunit">
    <text evidence="1">Homotetramer.</text>
</comment>
<comment type="miscellaneous">
    <text evidence="1">FMNH(2) which is absolutely required for this enzymatic reaction, is provided by SsuE.</text>
</comment>
<comment type="similarity">
    <text evidence="1">Belongs to the SsuD family.</text>
</comment>
<name>SSUD_ECOBW</name>
<evidence type="ECO:0000255" key="1">
    <source>
        <dbReference type="HAMAP-Rule" id="MF_01229"/>
    </source>
</evidence>
<protein>
    <recommendedName>
        <fullName evidence="1">Alkanesulfonate monooxygenase</fullName>
        <ecNumber evidence="1">1.14.14.5</ecNumber>
    </recommendedName>
    <alternativeName>
        <fullName evidence="1">FMNH2-dependent aliphatic sulfonate monooxygenase</fullName>
    </alternativeName>
</protein>
<reference key="1">
    <citation type="journal article" date="2009" name="J. Bacteriol.">
        <title>Genomic sequencing reveals regulatory mutations and recombinational events in the widely used MC4100 lineage of Escherichia coli K-12.</title>
        <authorList>
            <person name="Ferenci T."/>
            <person name="Zhou Z."/>
            <person name="Betteridge T."/>
            <person name="Ren Y."/>
            <person name="Liu Y."/>
            <person name="Feng L."/>
            <person name="Reeves P.R."/>
            <person name="Wang L."/>
        </authorList>
    </citation>
    <scope>NUCLEOTIDE SEQUENCE [LARGE SCALE GENOMIC DNA]</scope>
    <source>
        <strain>K12 / MC4100 / BW2952</strain>
    </source>
</reference>
<dbReference type="EC" id="1.14.14.5" evidence="1"/>
<dbReference type="EMBL" id="CP001396">
    <property type="protein sequence ID" value="ACR61955.1"/>
    <property type="molecule type" value="Genomic_DNA"/>
</dbReference>
<dbReference type="RefSeq" id="WP_000056006.1">
    <property type="nucleotide sequence ID" value="NC_012759.1"/>
</dbReference>
<dbReference type="SMR" id="C4ZQ61"/>
<dbReference type="KEGG" id="ebw:BWG_0787"/>
<dbReference type="HOGENOM" id="CLU_027853_1_0_6"/>
<dbReference type="GO" id="GO:0008726">
    <property type="term" value="F:alkanesulfonate monooxygenase activity"/>
    <property type="evidence" value="ECO:0007669"/>
    <property type="project" value="UniProtKB-UniRule"/>
</dbReference>
<dbReference type="GO" id="GO:0046306">
    <property type="term" value="P:alkanesulfonate catabolic process"/>
    <property type="evidence" value="ECO:0007669"/>
    <property type="project" value="TreeGrafter"/>
</dbReference>
<dbReference type="CDD" id="cd01094">
    <property type="entry name" value="Alkanesulfonate_monoxygenase"/>
    <property type="match status" value="1"/>
</dbReference>
<dbReference type="FunFam" id="3.20.20.30:FF:000001">
    <property type="entry name" value="Alkanesulfonate monooxygenase"/>
    <property type="match status" value="1"/>
</dbReference>
<dbReference type="Gene3D" id="3.20.20.30">
    <property type="entry name" value="Luciferase-like domain"/>
    <property type="match status" value="1"/>
</dbReference>
<dbReference type="HAMAP" id="MF_01229">
    <property type="entry name" value="Alkanesulf_monooxygen"/>
    <property type="match status" value="1"/>
</dbReference>
<dbReference type="InterPro" id="IPR019911">
    <property type="entry name" value="Alkanesulphonate_mOase_FMN-dep"/>
</dbReference>
<dbReference type="InterPro" id="IPR011251">
    <property type="entry name" value="Luciferase-like_dom"/>
</dbReference>
<dbReference type="InterPro" id="IPR036661">
    <property type="entry name" value="Luciferase-like_sf"/>
</dbReference>
<dbReference type="InterPro" id="IPR050172">
    <property type="entry name" value="SsuD_RutA_monooxygenase"/>
</dbReference>
<dbReference type="NCBIfam" id="TIGR03565">
    <property type="entry name" value="alk_sulf_monoox"/>
    <property type="match status" value="1"/>
</dbReference>
<dbReference type="NCBIfam" id="NF001939">
    <property type="entry name" value="PRK00719.1"/>
    <property type="match status" value="1"/>
</dbReference>
<dbReference type="PANTHER" id="PTHR42847">
    <property type="entry name" value="ALKANESULFONATE MONOOXYGENASE"/>
    <property type="match status" value="1"/>
</dbReference>
<dbReference type="PANTHER" id="PTHR42847:SF4">
    <property type="entry name" value="ALKANESULFONATE MONOOXYGENASE-RELATED"/>
    <property type="match status" value="1"/>
</dbReference>
<dbReference type="Pfam" id="PF00296">
    <property type="entry name" value="Bac_luciferase"/>
    <property type="match status" value="1"/>
</dbReference>
<dbReference type="SUPFAM" id="SSF51679">
    <property type="entry name" value="Bacterial luciferase-like"/>
    <property type="match status" value="1"/>
</dbReference>
<proteinExistence type="inferred from homology"/>
<sequence>MSLNMFWFLPTHGDGHYLGTEEGSRPVDHGYLQQIAQAADRLGYTGVLIPTGRSCEDAWLVAASMIPVTQRLKFLVALRPSVTSPTVAARQAATLDRLSNGRALFNLVTGSDPQELAGDGVFLDHSERYEASAEFTQVWRRLLQRETVDFNGKHIHVRGAKLLFPAIQQPYPPLYFGGSSDVAQELAAEQVDLYLTWGEPPELVKEKIEQVRAKAAAHGRKIRFGIRLHVIVRETNDEAWQAAERLISHLDDETIAKAQAAFARTDSVGQQRMAALHNGKRDNLEISPNLWAGVGLVRGGAGTALVGDGPTVAARINEYAALGIDSFVLSGYPHLEEAYRVGELLFPLLDVAIPEIPQPQPLNPQGEAVANDFIPRKVAQS</sequence>
<keyword id="KW-0285">Flavoprotein</keyword>
<keyword id="KW-0288">FMN</keyword>
<keyword id="KW-0503">Monooxygenase</keyword>
<keyword id="KW-0560">Oxidoreductase</keyword>
<feature type="chain" id="PRO_1000214022" description="Alkanesulfonate monooxygenase">
    <location>
        <begin position="1"/>
        <end position="381"/>
    </location>
</feature>
<accession>C4ZQ61</accession>
<gene>
    <name evidence="1" type="primary">ssuD</name>
    <name type="ordered locus">BWG_0787</name>
</gene>
<organism>
    <name type="scientific">Escherichia coli (strain K12 / MC4100 / BW2952)</name>
    <dbReference type="NCBI Taxonomy" id="595496"/>
    <lineage>
        <taxon>Bacteria</taxon>
        <taxon>Pseudomonadati</taxon>
        <taxon>Pseudomonadota</taxon>
        <taxon>Gammaproteobacteria</taxon>
        <taxon>Enterobacterales</taxon>
        <taxon>Enterobacteriaceae</taxon>
        <taxon>Escherichia</taxon>
    </lineage>
</organism>